<proteinExistence type="inferred from homology"/>
<protein>
    <recommendedName>
        <fullName evidence="1">Small ribosomal subunit protein uS17B</fullName>
    </recommendedName>
    <alternativeName>
        <fullName evidence="2">30S ribosomal protein S17 2</fullName>
    </alternativeName>
</protein>
<evidence type="ECO:0000255" key="1">
    <source>
        <dbReference type="HAMAP-Rule" id="MF_01345"/>
    </source>
</evidence>
<evidence type="ECO:0000305" key="2"/>
<gene>
    <name evidence="1" type="primary">rpsQ2</name>
    <name type="ordered locus">BT_0005</name>
</gene>
<organism>
    <name type="scientific">Bacteroides thetaiotaomicron (strain ATCC 29148 / DSM 2079 / JCM 5827 / CCUG 10774 / NCTC 10582 / VPI-5482 / E50)</name>
    <dbReference type="NCBI Taxonomy" id="226186"/>
    <lineage>
        <taxon>Bacteria</taxon>
        <taxon>Pseudomonadati</taxon>
        <taxon>Bacteroidota</taxon>
        <taxon>Bacteroidia</taxon>
        <taxon>Bacteroidales</taxon>
        <taxon>Bacteroidaceae</taxon>
        <taxon>Bacteroides</taxon>
    </lineage>
</organism>
<comment type="function">
    <text evidence="1">One of the primary rRNA binding proteins, it binds specifically to the 5'-end of 16S ribosomal RNA.</text>
</comment>
<comment type="subunit">
    <text evidence="1">Part of the 30S ribosomal subunit.</text>
</comment>
<comment type="similarity">
    <text evidence="1">Belongs to the universal ribosomal protein uS17 family.</text>
</comment>
<sequence>MVPCRLRPFLWNSPKVAVKRIPRQCIEGIVVSTKMQKTVVIEVERTKKHPKYGKTVQYTKKYKIHDPLEECSVGDRVLAHETRHFSKTKYFRFYRKLY</sequence>
<dbReference type="EMBL" id="AE015928">
    <property type="protein sequence ID" value="AAO75112.1"/>
    <property type="molecule type" value="Genomic_DNA"/>
</dbReference>
<dbReference type="RefSeq" id="NP_808918.1">
    <property type="nucleotide sequence ID" value="NC_004663.1"/>
</dbReference>
<dbReference type="SMR" id="Q8ABV5"/>
<dbReference type="STRING" id="226186.BT_0005"/>
<dbReference type="PaxDb" id="226186-BT_0005"/>
<dbReference type="EnsemblBacteria" id="AAO75112">
    <property type="protein sequence ID" value="AAO75112"/>
    <property type="gene ID" value="BT_0005"/>
</dbReference>
<dbReference type="KEGG" id="bth:BT_0005"/>
<dbReference type="PATRIC" id="fig|226186.12.peg.5"/>
<dbReference type="eggNOG" id="COG0186">
    <property type="taxonomic scope" value="Bacteria"/>
</dbReference>
<dbReference type="HOGENOM" id="CLU_1507758_0_0_10"/>
<dbReference type="InParanoid" id="Q8ABV5"/>
<dbReference type="OrthoDB" id="9811714at2"/>
<dbReference type="Proteomes" id="UP000001414">
    <property type="component" value="Chromosome"/>
</dbReference>
<dbReference type="GO" id="GO:0022627">
    <property type="term" value="C:cytosolic small ribosomal subunit"/>
    <property type="evidence" value="ECO:0000318"/>
    <property type="project" value="GO_Central"/>
</dbReference>
<dbReference type="GO" id="GO:0019843">
    <property type="term" value="F:rRNA binding"/>
    <property type="evidence" value="ECO:0007669"/>
    <property type="project" value="UniProtKB-UniRule"/>
</dbReference>
<dbReference type="GO" id="GO:0003735">
    <property type="term" value="F:structural constituent of ribosome"/>
    <property type="evidence" value="ECO:0000318"/>
    <property type="project" value="GO_Central"/>
</dbReference>
<dbReference type="GO" id="GO:0006412">
    <property type="term" value="P:translation"/>
    <property type="evidence" value="ECO:0007669"/>
    <property type="project" value="UniProtKB-UniRule"/>
</dbReference>
<dbReference type="CDD" id="cd00364">
    <property type="entry name" value="Ribosomal_uS17"/>
    <property type="match status" value="1"/>
</dbReference>
<dbReference type="Gene3D" id="2.40.50.140">
    <property type="entry name" value="Nucleic acid-binding proteins"/>
    <property type="match status" value="1"/>
</dbReference>
<dbReference type="HAMAP" id="MF_01345_B">
    <property type="entry name" value="Ribosomal_uS17_B"/>
    <property type="match status" value="1"/>
</dbReference>
<dbReference type="InterPro" id="IPR012340">
    <property type="entry name" value="NA-bd_OB-fold"/>
</dbReference>
<dbReference type="InterPro" id="IPR000266">
    <property type="entry name" value="Ribosomal_uS17"/>
</dbReference>
<dbReference type="InterPro" id="IPR019984">
    <property type="entry name" value="Ribosomal_uS17_bact/chlr"/>
</dbReference>
<dbReference type="NCBIfam" id="NF004123">
    <property type="entry name" value="PRK05610.1"/>
    <property type="match status" value="1"/>
</dbReference>
<dbReference type="NCBIfam" id="TIGR03635">
    <property type="entry name" value="uS17_bact"/>
    <property type="match status" value="1"/>
</dbReference>
<dbReference type="PANTHER" id="PTHR10744">
    <property type="entry name" value="40S RIBOSOMAL PROTEIN S11 FAMILY MEMBER"/>
    <property type="match status" value="1"/>
</dbReference>
<dbReference type="PANTHER" id="PTHR10744:SF1">
    <property type="entry name" value="SMALL RIBOSOMAL SUBUNIT PROTEIN US17M"/>
    <property type="match status" value="1"/>
</dbReference>
<dbReference type="Pfam" id="PF00366">
    <property type="entry name" value="Ribosomal_S17"/>
    <property type="match status" value="1"/>
</dbReference>
<dbReference type="PRINTS" id="PR00973">
    <property type="entry name" value="RIBOSOMALS17"/>
</dbReference>
<dbReference type="SUPFAM" id="SSF50249">
    <property type="entry name" value="Nucleic acid-binding proteins"/>
    <property type="match status" value="1"/>
</dbReference>
<reference key="1">
    <citation type="journal article" date="2003" name="Science">
        <title>A genomic view of the human-Bacteroides thetaiotaomicron symbiosis.</title>
        <authorList>
            <person name="Xu J."/>
            <person name="Bjursell M.K."/>
            <person name="Himrod J."/>
            <person name="Deng S."/>
            <person name="Carmichael L.K."/>
            <person name="Chiang H.C."/>
            <person name="Hooper L.V."/>
            <person name="Gordon J.I."/>
        </authorList>
    </citation>
    <scope>NUCLEOTIDE SEQUENCE [LARGE SCALE GENOMIC DNA]</scope>
    <source>
        <strain>ATCC 29148 / DSM 2079 / JCM 5827 / CCUG 10774 / NCTC 10582 / VPI-5482 / E50</strain>
    </source>
</reference>
<feature type="chain" id="PRO_0000233428" description="Small ribosomal subunit protein uS17B">
    <location>
        <begin position="1"/>
        <end position="98"/>
    </location>
</feature>
<keyword id="KW-1185">Reference proteome</keyword>
<keyword id="KW-0687">Ribonucleoprotein</keyword>
<keyword id="KW-0689">Ribosomal protein</keyword>
<keyword id="KW-0694">RNA-binding</keyword>
<keyword id="KW-0699">rRNA-binding</keyword>
<accession>Q8ABV5</accession>
<name>RS172_BACTN</name>